<dbReference type="EMBL" id="U43739">
    <property type="protein sequence ID" value="AAA85594.1"/>
    <property type="molecule type" value="Genomic_DNA"/>
</dbReference>
<dbReference type="EMBL" id="L75945">
    <property type="protein sequence ID" value="AAB58973.1"/>
    <property type="molecule type" value="Genomic_DNA"/>
</dbReference>
<dbReference type="EMBL" id="AE000783">
    <property type="protein sequence ID" value="AAC66678.1"/>
    <property type="molecule type" value="Genomic_DNA"/>
</dbReference>
<dbReference type="PIR" id="F70133">
    <property type="entry name" value="F70133"/>
</dbReference>
<dbReference type="RefSeq" id="NP_212404.1">
    <property type="nucleotide sequence ID" value="NC_001318.1"/>
</dbReference>
<dbReference type="RefSeq" id="WP_002556869.1">
    <property type="nucleotide sequence ID" value="NC_001318.1"/>
</dbReference>
<dbReference type="SMR" id="Q44758"/>
<dbReference type="STRING" id="224326.BB_0270"/>
<dbReference type="PaxDb" id="224326-BB_0270"/>
<dbReference type="EnsemblBacteria" id="AAC66678">
    <property type="protein sequence ID" value="AAC66678"/>
    <property type="gene ID" value="BB_0270"/>
</dbReference>
<dbReference type="GeneID" id="56567701"/>
<dbReference type="KEGG" id="bbu:BB_0270"/>
<dbReference type="PATRIC" id="fig|224326.49.peg.669"/>
<dbReference type="HOGENOM" id="CLU_009301_11_4_12"/>
<dbReference type="OrthoDB" id="9778554at2"/>
<dbReference type="Proteomes" id="UP000001807">
    <property type="component" value="Chromosome"/>
</dbReference>
<dbReference type="GO" id="GO:0005829">
    <property type="term" value="C:cytosol"/>
    <property type="evidence" value="ECO:0000314"/>
    <property type="project" value="CAFA"/>
</dbReference>
<dbReference type="GO" id="GO:0005886">
    <property type="term" value="C:plasma membrane"/>
    <property type="evidence" value="ECO:0007669"/>
    <property type="project" value="UniProtKB-SubCell"/>
</dbReference>
<dbReference type="GO" id="GO:0016887">
    <property type="term" value="F:ATP hydrolysis activity"/>
    <property type="evidence" value="ECO:0007669"/>
    <property type="project" value="InterPro"/>
</dbReference>
<dbReference type="GO" id="GO:0005525">
    <property type="term" value="F:GTP binding"/>
    <property type="evidence" value="ECO:0007669"/>
    <property type="project" value="UniProtKB-KW"/>
</dbReference>
<dbReference type="GO" id="GO:0003924">
    <property type="term" value="F:GTPase activity"/>
    <property type="evidence" value="ECO:0007669"/>
    <property type="project" value="InterPro"/>
</dbReference>
<dbReference type="GO" id="GO:0005047">
    <property type="term" value="F:signal recognition particle binding"/>
    <property type="evidence" value="ECO:0007669"/>
    <property type="project" value="TreeGrafter"/>
</dbReference>
<dbReference type="GO" id="GO:0044781">
    <property type="term" value="P:bacterial-type flagellum organization"/>
    <property type="evidence" value="ECO:0007669"/>
    <property type="project" value="UniProtKB-KW"/>
</dbReference>
<dbReference type="GO" id="GO:0015031">
    <property type="term" value="P:protein transport"/>
    <property type="evidence" value="ECO:0007669"/>
    <property type="project" value="UniProtKB-KW"/>
</dbReference>
<dbReference type="GO" id="GO:0006614">
    <property type="term" value="P:SRP-dependent cotranslational protein targeting to membrane"/>
    <property type="evidence" value="ECO:0007669"/>
    <property type="project" value="InterPro"/>
</dbReference>
<dbReference type="CDD" id="cd17873">
    <property type="entry name" value="FlhF"/>
    <property type="match status" value="1"/>
</dbReference>
<dbReference type="FunFam" id="1.20.120.1380:FF:000006">
    <property type="entry name" value="Flagellar biosynthesis protein FlhF (Flagella-associated GTP-binding protein)"/>
    <property type="match status" value="1"/>
</dbReference>
<dbReference type="FunFam" id="3.40.50.300:FF:000695">
    <property type="entry name" value="Flagellar biosynthesis regulator FlhF"/>
    <property type="match status" value="1"/>
</dbReference>
<dbReference type="Gene3D" id="1.20.120.1380">
    <property type="entry name" value="Flagellar FlhF biosynthesis protein, N domain"/>
    <property type="match status" value="1"/>
</dbReference>
<dbReference type="Gene3D" id="3.40.50.300">
    <property type="entry name" value="P-loop containing nucleotide triphosphate hydrolases"/>
    <property type="match status" value="1"/>
</dbReference>
<dbReference type="InterPro" id="IPR003593">
    <property type="entry name" value="AAA+_ATPase"/>
</dbReference>
<dbReference type="InterPro" id="IPR020006">
    <property type="entry name" value="FlhF"/>
</dbReference>
<dbReference type="InterPro" id="IPR047040">
    <property type="entry name" value="FlhF__GTPase_dom"/>
</dbReference>
<dbReference type="InterPro" id="IPR027417">
    <property type="entry name" value="P-loop_NTPase"/>
</dbReference>
<dbReference type="InterPro" id="IPR000897">
    <property type="entry name" value="SRP54_GTPase_dom"/>
</dbReference>
<dbReference type="NCBIfam" id="TIGR03499">
    <property type="entry name" value="FlhF"/>
    <property type="match status" value="1"/>
</dbReference>
<dbReference type="NCBIfam" id="NF009366">
    <property type="entry name" value="PRK12723.1"/>
    <property type="match status" value="1"/>
</dbReference>
<dbReference type="PANTHER" id="PTHR43134:SF3">
    <property type="entry name" value="FLAGELLAR BIOSYNTHESIS PROTEIN FLHF"/>
    <property type="match status" value="1"/>
</dbReference>
<dbReference type="PANTHER" id="PTHR43134">
    <property type="entry name" value="SIGNAL RECOGNITION PARTICLE RECEPTOR SUBUNIT ALPHA"/>
    <property type="match status" value="1"/>
</dbReference>
<dbReference type="Pfam" id="PF00448">
    <property type="entry name" value="SRP54"/>
    <property type="match status" value="1"/>
</dbReference>
<dbReference type="SMART" id="SM00382">
    <property type="entry name" value="AAA"/>
    <property type="match status" value="1"/>
</dbReference>
<dbReference type="SMART" id="SM00962">
    <property type="entry name" value="SRP54"/>
    <property type="match status" value="1"/>
</dbReference>
<dbReference type="SUPFAM" id="SSF52540">
    <property type="entry name" value="P-loop containing nucleoside triphosphate hydrolases"/>
    <property type="match status" value="1"/>
</dbReference>
<organism>
    <name type="scientific">Borreliella burgdorferi (strain ATCC 35210 / DSM 4680 / CIP 102532 / B31)</name>
    <name type="common">Borrelia burgdorferi</name>
    <dbReference type="NCBI Taxonomy" id="224326"/>
    <lineage>
        <taxon>Bacteria</taxon>
        <taxon>Pseudomonadati</taxon>
        <taxon>Spirochaetota</taxon>
        <taxon>Spirochaetia</taxon>
        <taxon>Spirochaetales</taxon>
        <taxon>Borreliaceae</taxon>
        <taxon>Borreliella</taxon>
    </lineage>
</organism>
<protein>
    <recommendedName>
        <fullName>Flagellar biosynthesis protein FlhF</fullName>
    </recommendedName>
    <alternativeName>
        <fullName>Flagella-associated GTP-binding protein</fullName>
    </alternativeName>
</protein>
<accession>Q44758</accession>
<accession>Q44910</accession>
<proteinExistence type="inferred from homology"/>
<comment type="function">
    <text evidence="1">Necessary for flagellar biosynthesis. May be involved in translocation of the flagellum (By similarity).</text>
</comment>
<comment type="subcellular location">
    <subcellularLocation>
        <location evidence="1">Cell membrane</location>
        <topology evidence="1">Peripheral membrane protein</topology>
        <orientation evidence="1">Cytoplasmic side</orientation>
    </subcellularLocation>
</comment>
<comment type="similarity">
    <text evidence="2">Belongs to the GTP-binding SRP family.</text>
</comment>
<sequence length="388" mass="44369">MVQYFTEKGPTYNEVIEIIKKKYGKNARVMTYKTVPHGGILGLFSKDWVEVSGYVRYDIGNQQINVEDEKRKILQSIKREENSSIEDVLKEVKSLKTELAHKKENINHPTITKIEDILRENDFSENYIKDINEFIKREFSLSDLDDYERVREDVVLYIAKTIKCSGSIIDNLKKRVFILVGPTGVGKTTTIAKLAAIYGINGESKSLNIKIITIDNYRIGAKKQIQTYGDIMGIPVRAIESFKDLKDEITDSKDFDLILVDTIGKSPKDFMKLAEMKELLNACGRDAEFHLAVSSTTKTSDVKEIFHQFSPFNYKTVIFTKVDETTCVGNLISLIYEMKKVVSYVTDGQIVPHNISVAEPLTFIRRINGYRISDDAEFIKKIKSKSYY</sequence>
<evidence type="ECO:0000250" key="1"/>
<evidence type="ECO:0000305" key="2"/>
<gene>
    <name type="primary">flhF</name>
    <name type="ordered locus">BB_0270</name>
</gene>
<reference key="1">
    <citation type="submission" date="1995-12" db="EMBL/GenBank/DDBJ databases">
        <authorList>
            <person name="Dunn J.J."/>
            <person name="Butler-Loffredo L."/>
            <person name="Kieleczawa J."/>
            <person name="Medalle J."/>
            <person name="Luft B.J."/>
        </authorList>
    </citation>
    <scope>NUCLEOTIDE SEQUENCE [GENOMIC DNA]</scope>
    <source>
        <strain>ATCC 35210 / DSM 4680 / CIP 102532 / B31</strain>
    </source>
</reference>
<reference key="2">
    <citation type="journal article" date="1997" name="Gene">
        <title>Identification of a large motility operon in Borrelia burgdorferi by semi-random PCR chromosome walking.</title>
        <authorList>
            <person name="Ge Y."/>
            <person name="Charon N.W."/>
        </authorList>
    </citation>
    <scope>NUCLEOTIDE SEQUENCE [GENOMIC DNA]</scope>
    <source>
        <strain>212</strain>
    </source>
</reference>
<reference key="3">
    <citation type="journal article" date="1997" name="Nature">
        <title>Genomic sequence of a Lyme disease spirochaete, Borrelia burgdorferi.</title>
        <authorList>
            <person name="Fraser C.M."/>
            <person name="Casjens S."/>
            <person name="Huang W.M."/>
            <person name="Sutton G.G."/>
            <person name="Clayton R.A."/>
            <person name="Lathigra R."/>
            <person name="White O."/>
            <person name="Ketchum K.A."/>
            <person name="Dodson R.J."/>
            <person name="Hickey E.K."/>
            <person name="Gwinn M.L."/>
            <person name="Dougherty B.A."/>
            <person name="Tomb J.-F."/>
            <person name="Fleischmann R.D."/>
            <person name="Richardson D.L."/>
            <person name="Peterson J.D."/>
            <person name="Kerlavage A.R."/>
            <person name="Quackenbush J."/>
            <person name="Salzberg S.L."/>
            <person name="Hanson M."/>
            <person name="van Vugt R."/>
            <person name="Palmer N."/>
            <person name="Adams M.D."/>
            <person name="Gocayne J.D."/>
            <person name="Weidman J.F."/>
            <person name="Utterback T.R."/>
            <person name="Watthey L."/>
            <person name="McDonald L.A."/>
            <person name="Artiach P."/>
            <person name="Bowman C."/>
            <person name="Garland S.A."/>
            <person name="Fujii C."/>
            <person name="Cotton M.D."/>
            <person name="Horst K."/>
            <person name="Roberts K.M."/>
            <person name="Hatch B."/>
            <person name="Smith H.O."/>
            <person name="Venter J.C."/>
        </authorList>
    </citation>
    <scope>NUCLEOTIDE SEQUENCE [LARGE SCALE GENOMIC DNA]</scope>
    <source>
        <strain>ATCC 35210 / DSM 4680 / CIP 102532 / B31</strain>
    </source>
</reference>
<name>FLHF_BORBU</name>
<keyword id="KW-1005">Bacterial flagellum biogenesis</keyword>
<keyword id="KW-1006">Bacterial flagellum protein export</keyword>
<keyword id="KW-1003">Cell membrane</keyword>
<keyword id="KW-0342">GTP-binding</keyword>
<keyword id="KW-0472">Membrane</keyword>
<keyword id="KW-0547">Nucleotide-binding</keyword>
<keyword id="KW-0653">Protein transport</keyword>
<keyword id="KW-1185">Reference proteome</keyword>
<keyword id="KW-0813">Transport</keyword>
<feature type="chain" id="PRO_0000101221" description="Flagellar biosynthesis protein FlhF">
    <location>
        <begin position="1"/>
        <end position="388"/>
    </location>
</feature>
<feature type="binding site" evidence="1">
    <location>
        <begin position="181"/>
        <end position="188"/>
    </location>
    <ligand>
        <name>GTP</name>
        <dbReference type="ChEBI" id="CHEBI:37565"/>
    </ligand>
</feature>
<feature type="binding site" evidence="1">
    <location>
        <begin position="261"/>
        <end position="265"/>
    </location>
    <ligand>
        <name>GTP</name>
        <dbReference type="ChEBI" id="CHEBI:37565"/>
    </ligand>
</feature>
<feature type="binding site" evidence="1">
    <location>
        <begin position="320"/>
        <end position="323"/>
    </location>
    <ligand>
        <name>GTP</name>
        <dbReference type="ChEBI" id="CHEBI:37565"/>
    </ligand>
</feature>
<feature type="sequence conflict" description="In Ref. 2; AAB58973." evidence="2" ref="2">
    <location>
        <position position="39"/>
    </location>
</feature>
<feature type="sequence conflict" description="In Ref. 2; AAB58973." evidence="2" ref="2">
    <original>K</original>
    <variation>R</variation>
    <location>
        <position position="380"/>
    </location>
</feature>